<comment type="function">
    <text evidence="1 4 5">Involved in trafficking to the vacuole (PubMed:21278129). Required for cell proliferation and cell expansion, but not for cell differentiation (PubMed:21278129). Acts in low affinity electroneutral exchange of protons for cations such as Na(+) or K(+) across membranes (PubMed:12047628). May also exchange Li(+) and Cs(+) with a lower affinity (By similarity).</text>
</comment>
<comment type="catalytic activity">
    <reaction evidence="1">
        <text>Na(+)(in) + H(+)(out) = Na(+)(out) + H(+)(in)</text>
        <dbReference type="Rhea" id="RHEA:29419"/>
        <dbReference type="ChEBI" id="CHEBI:15378"/>
        <dbReference type="ChEBI" id="CHEBI:29101"/>
    </reaction>
</comment>
<comment type="catalytic activity">
    <reaction evidence="1">
        <text>K(+)(in) + H(+)(out) = K(+)(out) + H(+)(in)</text>
        <dbReference type="Rhea" id="RHEA:29467"/>
        <dbReference type="ChEBI" id="CHEBI:15378"/>
        <dbReference type="ChEBI" id="CHEBI:29103"/>
    </reaction>
</comment>
<comment type="subcellular location">
    <subcellularLocation>
        <location evidence="5">Endosome membrane</location>
        <topology evidence="5">Multi-pass membrane protein</topology>
    </subcellularLocation>
    <subcellularLocation>
        <location evidence="5">Golgi apparatus</location>
        <location evidence="5">trans-Golgi network membrane</location>
        <topology evidence="5">Multi-pass membrane protein</topology>
    </subcellularLocation>
    <subcellularLocation>
        <location evidence="5">Golgi apparatus</location>
        <location evidence="5">Golgi stack membrane</location>
        <topology evidence="5">Multi-pass membrane protein</topology>
    </subcellularLocation>
</comment>
<comment type="tissue specificity">
    <text evidence="4 5">Expressed in roots, leaves, stems, flowers and siliques. Detected at low levels in roots and shoots.</text>
</comment>
<comment type="induction">
    <text evidence="4">Induced by NaCl in a ABA-independent manner.</text>
</comment>
<comment type="disruption phenotype">
    <text evidence="5">No visible phenotype; due to redundancy with NHX6. Nhx5 and nhx6 double mutant has a slower development, is drastically smaller and is salt sensitive.</text>
</comment>
<comment type="similarity">
    <text evidence="6">Belongs to the monovalent cation:proton antiporter 1 (CPA1) transporter (TC 2.A.36) family.</text>
</comment>
<comment type="sequence caution" evidence="6">
    <conflict type="erroneous gene model prediction">
        <sequence resource="EMBL-CDS" id="AAD25617"/>
    </conflict>
</comment>
<dbReference type="EMBL" id="AC005287">
    <property type="protein sequence ID" value="AAD25617.1"/>
    <property type="status" value="ALT_SEQ"/>
    <property type="molecule type" value="Genomic_DNA"/>
</dbReference>
<dbReference type="EMBL" id="CP002684">
    <property type="protein sequence ID" value="AEE33089.1"/>
    <property type="molecule type" value="Genomic_DNA"/>
</dbReference>
<dbReference type="EMBL" id="AK226435">
    <property type="protein sequence ID" value="BAE98578.1"/>
    <property type="molecule type" value="mRNA"/>
</dbReference>
<dbReference type="EMBL" id="AF490589">
    <property type="protein sequence ID" value="AAM08406.1"/>
    <property type="molecule type" value="mRNA"/>
</dbReference>
<dbReference type="PIR" id="D96585">
    <property type="entry name" value="D96585"/>
</dbReference>
<dbReference type="RefSeq" id="NP_175839.2">
    <property type="nucleotide sequence ID" value="NM_104315.5"/>
</dbReference>
<dbReference type="SMR" id="Q8S396"/>
<dbReference type="BioGRID" id="27103">
    <property type="interactions" value="4"/>
</dbReference>
<dbReference type="FunCoup" id="Q8S396">
    <property type="interactions" value="3504"/>
</dbReference>
<dbReference type="STRING" id="3702.Q8S396"/>
<dbReference type="TCDB" id="2.A.36.1.20">
    <property type="family name" value="the monovalent cation:proton antiporter-1 (cpa1) family"/>
</dbReference>
<dbReference type="GlyCosmos" id="Q8S396">
    <property type="glycosylation" value="1 site, No reported glycans"/>
</dbReference>
<dbReference type="GlyGen" id="Q8S396">
    <property type="glycosylation" value="1 site"/>
</dbReference>
<dbReference type="iPTMnet" id="Q8S396"/>
<dbReference type="PaxDb" id="3702-AT1G54370.1"/>
<dbReference type="ProteomicsDB" id="250562"/>
<dbReference type="EnsemblPlants" id="AT1G54370.1">
    <property type="protein sequence ID" value="AT1G54370.1"/>
    <property type="gene ID" value="AT1G54370"/>
</dbReference>
<dbReference type="GeneID" id="841878"/>
<dbReference type="Gramene" id="AT1G54370.1">
    <property type="protein sequence ID" value="AT1G54370.1"/>
    <property type="gene ID" value="AT1G54370"/>
</dbReference>
<dbReference type="KEGG" id="ath:AT1G54370"/>
<dbReference type="Araport" id="AT1G54370"/>
<dbReference type="TAIR" id="AT1G54370">
    <property type="gene designation" value="NHX5"/>
</dbReference>
<dbReference type="eggNOG" id="KOG1965">
    <property type="taxonomic scope" value="Eukaryota"/>
</dbReference>
<dbReference type="HOGENOM" id="CLU_005912_11_1_1"/>
<dbReference type="InParanoid" id="Q8S396"/>
<dbReference type="OMA" id="IINLMSH"/>
<dbReference type="PRO" id="PR:Q8S396"/>
<dbReference type="Proteomes" id="UP000006548">
    <property type="component" value="Chromosome 1"/>
</dbReference>
<dbReference type="ExpressionAtlas" id="Q8S396">
    <property type="expression patterns" value="baseline and differential"/>
</dbReference>
<dbReference type="GO" id="GO:0005768">
    <property type="term" value="C:endosome"/>
    <property type="evidence" value="ECO:0000314"/>
    <property type="project" value="TAIR"/>
</dbReference>
<dbReference type="GO" id="GO:0010008">
    <property type="term" value="C:endosome membrane"/>
    <property type="evidence" value="ECO:0007669"/>
    <property type="project" value="UniProtKB-SubCell"/>
</dbReference>
<dbReference type="GO" id="GO:0032580">
    <property type="term" value="C:Golgi cisterna membrane"/>
    <property type="evidence" value="ECO:0007669"/>
    <property type="project" value="UniProtKB-SubCell"/>
</dbReference>
<dbReference type="GO" id="GO:0015385">
    <property type="term" value="F:sodium:proton antiporter activity"/>
    <property type="evidence" value="ECO:0007669"/>
    <property type="project" value="InterPro"/>
</dbReference>
<dbReference type="GO" id="GO:0006813">
    <property type="term" value="P:potassium ion transport"/>
    <property type="evidence" value="ECO:0007669"/>
    <property type="project" value="UniProtKB-KW"/>
</dbReference>
<dbReference type="GO" id="GO:0006885">
    <property type="term" value="P:regulation of pH"/>
    <property type="evidence" value="ECO:0007669"/>
    <property type="project" value="InterPro"/>
</dbReference>
<dbReference type="Gene3D" id="6.10.140.1330">
    <property type="match status" value="1"/>
</dbReference>
<dbReference type="InterPro" id="IPR018422">
    <property type="entry name" value="Cation/H_exchanger_CPA1"/>
</dbReference>
<dbReference type="InterPro" id="IPR006153">
    <property type="entry name" value="Cation/H_exchanger_TM"/>
</dbReference>
<dbReference type="InterPro" id="IPR004709">
    <property type="entry name" value="NaH_exchanger"/>
</dbReference>
<dbReference type="NCBIfam" id="TIGR00840">
    <property type="entry name" value="b_cpa1"/>
    <property type="match status" value="1"/>
</dbReference>
<dbReference type="PANTHER" id="PTHR10110">
    <property type="entry name" value="SODIUM/HYDROGEN EXCHANGER"/>
    <property type="match status" value="1"/>
</dbReference>
<dbReference type="PANTHER" id="PTHR10110:SF127">
    <property type="entry name" value="SODIUM_HYDROGEN EXCHANGER 5-RELATED"/>
    <property type="match status" value="1"/>
</dbReference>
<dbReference type="Pfam" id="PF00999">
    <property type="entry name" value="Na_H_Exchanger"/>
    <property type="match status" value="1"/>
</dbReference>
<dbReference type="PRINTS" id="PR01084">
    <property type="entry name" value="NAHEXCHNGR"/>
</dbReference>
<reference key="1">
    <citation type="journal article" date="2000" name="Nature">
        <title>Sequence and analysis of chromosome 1 of the plant Arabidopsis thaliana.</title>
        <authorList>
            <person name="Theologis A."/>
            <person name="Ecker J.R."/>
            <person name="Palm C.J."/>
            <person name="Federspiel N.A."/>
            <person name="Kaul S."/>
            <person name="White O."/>
            <person name="Alonso J."/>
            <person name="Altafi H."/>
            <person name="Araujo R."/>
            <person name="Bowman C.L."/>
            <person name="Brooks S.Y."/>
            <person name="Buehler E."/>
            <person name="Chan A."/>
            <person name="Chao Q."/>
            <person name="Chen H."/>
            <person name="Cheuk R.F."/>
            <person name="Chin C.W."/>
            <person name="Chung M.K."/>
            <person name="Conn L."/>
            <person name="Conway A.B."/>
            <person name="Conway A.R."/>
            <person name="Creasy T.H."/>
            <person name="Dewar K."/>
            <person name="Dunn P."/>
            <person name="Etgu P."/>
            <person name="Feldblyum T.V."/>
            <person name="Feng J.-D."/>
            <person name="Fong B."/>
            <person name="Fujii C.Y."/>
            <person name="Gill J.E."/>
            <person name="Goldsmith A.D."/>
            <person name="Haas B."/>
            <person name="Hansen N.F."/>
            <person name="Hughes B."/>
            <person name="Huizar L."/>
            <person name="Hunter J.L."/>
            <person name="Jenkins J."/>
            <person name="Johnson-Hopson C."/>
            <person name="Khan S."/>
            <person name="Khaykin E."/>
            <person name="Kim C.J."/>
            <person name="Koo H.L."/>
            <person name="Kremenetskaia I."/>
            <person name="Kurtz D.B."/>
            <person name="Kwan A."/>
            <person name="Lam B."/>
            <person name="Langin-Hooper S."/>
            <person name="Lee A."/>
            <person name="Lee J.M."/>
            <person name="Lenz C.A."/>
            <person name="Li J.H."/>
            <person name="Li Y.-P."/>
            <person name="Lin X."/>
            <person name="Liu S.X."/>
            <person name="Liu Z.A."/>
            <person name="Luros J.S."/>
            <person name="Maiti R."/>
            <person name="Marziali A."/>
            <person name="Militscher J."/>
            <person name="Miranda M."/>
            <person name="Nguyen M."/>
            <person name="Nierman W.C."/>
            <person name="Osborne B.I."/>
            <person name="Pai G."/>
            <person name="Peterson J."/>
            <person name="Pham P.K."/>
            <person name="Rizzo M."/>
            <person name="Rooney T."/>
            <person name="Rowley D."/>
            <person name="Sakano H."/>
            <person name="Salzberg S.L."/>
            <person name="Schwartz J.R."/>
            <person name="Shinn P."/>
            <person name="Southwick A.M."/>
            <person name="Sun H."/>
            <person name="Tallon L.J."/>
            <person name="Tambunga G."/>
            <person name="Toriumi M.J."/>
            <person name="Town C.D."/>
            <person name="Utterback T."/>
            <person name="Van Aken S."/>
            <person name="Vaysberg M."/>
            <person name="Vysotskaia V.S."/>
            <person name="Walker M."/>
            <person name="Wu D."/>
            <person name="Yu G."/>
            <person name="Fraser C.M."/>
            <person name="Venter J.C."/>
            <person name="Davis R.W."/>
        </authorList>
    </citation>
    <scope>NUCLEOTIDE SEQUENCE [LARGE SCALE GENOMIC DNA]</scope>
    <source>
        <strain>cv. Columbia</strain>
    </source>
</reference>
<reference key="2">
    <citation type="journal article" date="2017" name="Plant J.">
        <title>Araport11: a complete reannotation of the Arabidopsis thaliana reference genome.</title>
        <authorList>
            <person name="Cheng C.Y."/>
            <person name="Krishnakumar V."/>
            <person name="Chan A.P."/>
            <person name="Thibaud-Nissen F."/>
            <person name="Schobel S."/>
            <person name="Town C.D."/>
        </authorList>
    </citation>
    <scope>GENOME REANNOTATION</scope>
    <source>
        <strain>cv. Columbia</strain>
    </source>
</reference>
<reference key="3">
    <citation type="submission" date="2006-07" db="EMBL/GenBank/DDBJ databases">
        <title>Large-scale analysis of RIKEN Arabidopsis full-length (RAFL) cDNAs.</title>
        <authorList>
            <person name="Totoki Y."/>
            <person name="Seki M."/>
            <person name="Ishida J."/>
            <person name="Nakajima M."/>
            <person name="Enju A."/>
            <person name="Kamiya A."/>
            <person name="Narusaka M."/>
            <person name="Shin-i T."/>
            <person name="Nakagawa M."/>
            <person name="Sakamoto N."/>
            <person name="Oishi K."/>
            <person name="Kohara Y."/>
            <person name="Kobayashi M."/>
            <person name="Toyoda A."/>
            <person name="Sakaki Y."/>
            <person name="Sakurai T."/>
            <person name="Iida K."/>
            <person name="Akiyama K."/>
            <person name="Satou M."/>
            <person name="Toyoda T."/>
            <person name="Konagaya A."/>
            <person name="Carninci P."/>
            <person name="Kawai J."/>
            <person name="Hayashizaki Y."/>
            <person name="Shinozaki K."/>
        </authorList>
    </citation>
    <scope>NUCLEOTIDE SEQUENCE [LARGE SCALE MRNA]</scope>
    <source>
        <strain>cv. Columbia</strain>
    </source>
</reference>
<reference key="4">
    <citation type="journal article" date="2002" name="Plant J.">
        <title>Differential expression and function of Arabidopsis thaliana NHX Na(+)/H(+) antiporters in the salt stress response.</title>
        <authorList>
            <person name="Yokoi S."/>
            <person name="Quintero F.J."/>
            <person name="Cubero B."/>
            <person name="Ruiz M.T."/>
            <person name="Bressan R.A."/>
            <person name="Hasegawa P.M."/>
            <person name="Pardo J.M."/>
        </authorList>
    </citation>
    <scope>NUCLEOTIDE SEQUENCE [MRNA] OF 5-521</scope>
    <scope>FUNCTION</scope>
    <scope>TISSUE SPECIFICITY</scope>
    <scope>INDUCTION</scope>
    <source>
        <strain>cv. Landsberg erecta</strain>
    </source>
</reference>
<reference key="5">
    <citation type="journal article" date="2011" name="Plant Cell">
        <title>The Arabidopsis intracellular Na+/H+ antiporters NHX5 and NHX6 are endosome associated and necessary for plant growth and development.</title>
        <authorList>
            <person name="Bassil E."/>
            <person name="Ohto M.A."/>
            <person name="Esumi T."/>
            <person name="Tajima H."/>
            <person name="Zhu Z."/>
            <person name="Cagnac O."/>
            <person name="Belmonte M."/>
            <person name="Peleg Z."/>
            <person name="Yamaguchi T."/>
            <person name="Blumwald E."/>
        </authorList>
    </citation>
    <scope>FUNCTION</scope>
    <scope>SUBCELLULAR LOCATION</scope>
    <scope>TISSUE SPECIFICITY</scope>
    <scope>DISRUPTION PHENOTYPE</scope>
</reference>
<evidence type="ECO:0000250" key="1">
    <source>
        <dbReference type="UniProtKB" id="Q68KI4"/>
    </source>
</evidence>
<evidence type="ECO:0000255" key="2"/>
<evidence type="ECO:0000256" key="3">
    <source>
        <dbReference type="SAM" id="MobiDB-lite"/>
    </source>
</evidence>
<evidence type="ECO:0000269" key="4">
    <source>
    </source>
</evidence>
<evidence type="ECO:0000269" key="5">
    <source>
    </source>
</evidence>
<evidence type="ECO:0000305" key="6"/>
<sequence length="521" mass="57335">MEEVMISPVEHDPQGQVKQQQAAGVGILLQIMMLVLSFVLGHVLRRHRFHYLPEASGSLLIGLIVGILANISDTETSIRTWFNFHEEFFFLFLLPPIIFQSGFSLQPKPFFSNFGAIVTFAIIGTFVASVVTGGLVYLGGSMYLMYKLPFVECLMFGALISATDPVTVLSIFQDVGTDVNLYALVFGESVLNDAMAISLYRTMSLVNRQSSSGEHFFMVVIRFFETFAGSMSAGVGVGFTSALLFKYAGLDTENLQNLECCLFVLFPYFSYMLAEGVGLSGIVSILFTGIVMKRYTFSNLSEASQSFVSSFFHLISSLAETFTFIYMGFDIAMEQHSWSHVGFILFSILFIGVARAVNVFGCAYLVNLFRQENQKIPMKHQKALWYSGLRGAMAFALALQSLHDLPEGHGQIIFTATTTIVVVTVLLIGGSTGKMLEALEVVGDDLDDSMSEGFEESDHQYVPPPFSIGASSDEDTSSSGSRFKMKLKEFHKTTTSFTALDKNFLTPFFTTNSGDGDGDGE</sequence>
<gene>
    <name type="primary">NHX5</name>
    <name type="ordered locus">At1g54370</name>
    <name type="ORF">F20D21.19</name>
</gene>
<protein>
    <recommendedName>
        <fullName>Sodium/hydrogen exchanger 5</fullName>
    </recommendedName>
    <alternativeName>
        <fullName>Na(+)/H(+) exchanger 5</fullName>
        <shortName>NHE-5</shortName>
    </alternativeName>
</protein>
<feature type="chain" id="PRO_0000052376" description="Sodium/hydrogen exchanger 5">
    <location>
        <begin position="1"/>
        <end position="521"/>
    </location>
</feature>
<feature type="topological domain" description="Cytoplasmic" evidence="2">
    <location>
        <begin position="1"/>
        <end position="23"/>
    </location>
</feature>
<feature type="transmembrane region" description="Helical" evidence="2">
    <location>
        <begin position="24"/>
        <end position="44"/>
    </location>
</feature>
<feature type="topological domain" description="Lumenal" evidence="2">
    <location>
        <begin position="45"/>
        <end position="48"/>
    </location>
</feature>
<feature type="transmembrane region" description="Helical" evidence="2">
    <location>
        <begin position="49"/>
        <end position="69"/>
    </location>
</feature>
<feature type="topological domain" description="Cytoplasmic" evidence="2">
    <location>
        <begin position="70"/>
        <end position="86"/>
    </location>
</feature>
<feature type="intramembrane region" description="Helical" evidence="2">
    <location>
        <begin position="87"/>
        <end position="107"/>
    </location>
</feature>
<feature type="topological domain" description="Cytoplasmic" evidence="2">
    <location>
        <begin position="108"/>
        <end position="115"/>
    </location>
</feature>
<feature type="transmembrane region" description="Helical" evidence="2">
    <location>
        <begin position="116"/>
        <end position="136"/>
    </location>
</feature>
<feature type="topological domain" description="Lumenal" evidence="2">
    <location>
        <begin position="137"/>
        <end position="141"/>
    </location>
</feature>
<feature type="intramembrane region" description="Helical" evidence="2">
    <location>
        <begin position="142"/>
        <end position="162"/>
    </location>
</feature>
<feature type="intramembrane region" description="Helical" evidence="2">
    <location>
        <begin position="166"/>
        <end position="186"/>
    </location>
</feature>
<feature type="topological domain" description="Lumenal" evidence="2">
    <location>
        <begin position="187"/>
        <end position="222"/>
    </location>
</feature>
<feature type="transmembrane region" description="Helical" evidence="2">
    <location>
        <begin position="223"/>
        <end position="243"/>
    </location>
</feature>
<feature type="topological domain" description="Cytoplasmic" evidence="2">
    <location>
        <begin position="244"/>
        <end position="271"/>
    </location>
</feature>
<feature type="transmembrane region" description="Helical" evidence="2">
    <location>
        <begin position="272"/>
        <end position="292"/>
    </location>
</feature>
<feature type="topological domain" description="Lumenal" evidence="2">
    <location>
        <begin position="293"/>
        <end position="310"/>
    </location>
</feature>
<feature type="transmembrane region" description="Helical" evidence="2">
    <location>
        <begin position="311"/>
        <end position="331"/>
    </location>
</feature>
<feature type="topological domain" description="Cytoplasmic" evidence="2">
    <location>
        <begin position="332"/>
        <end position="340"/>
    </location>
</feature>
<feature type="transmembrane region" description="Helical" evidence="2">
    <location>
        <begin position="341"/>
        <end position="361"/>
    </location>
</feature>
<feature type="topological domain" description="Lumenal" evidence="2">
    <location>
        <begin position="362"/>
        <end position="382"/>
    </location>
</feature>
<feature type="transmembrane region" description="Helical" evidence="2">
    <location>
        <begin position="383"/>
        <end position="402"/>
    </location>
</feature>
<feature type="topological domain" description="Cytoplasmic" evidence="2">
    <location>
        <begin position="403"/>
        <end position="411"/>
    </location>
</feature>
<feature type="transmembrane region" description="Helical" evidence="2">
    <location>
        <begin position="412"/>
        <end position="432"/>
    </location>
</feature>
<feature type="topological domain" description="Lumenal" evidence="2">
    <location>
        <begin position="433"/>
        <end position="521"/>
    </location>
</feature>
<feature type="region of interest" description="Disordered" evidence="3">
    <location>
        <begin position="453"/>
        <end position="480"/>
    </location>
</feature>
<feature type="compositionally biased region" description="Low complexity" evidence="3">
    <location>
        <begin position="467"/>
        <end position="480"/>
    </location>
</feature>
<feature type="glycosylation site" description="N-linked (GlcNAc...) asparagine" evidence="2">
    <location>
        <position position="299"/>
    </location>
</feature>
<organism>
    <name type="scientific">Arabidopsis thaliana</name>
    <name type="common">Mouse-ear cress</name>
    <dbReference type="NCBI Taxonomy" id="3702"/>
    <lineage>
        <taxon>Eukaryota</taxon>
        <taxon>Viridiplantae</taxon>
        <taxon>Streptophyta</taxon>
        <taxon>Embryophyta</taxon>
        <taxon>Tracheophyta</taxon>
        <taxon>Spermatophyta</taxon>
        <taxon>Magnoliopsida</taxon>
        <taxon>eudicotyledons</taxon>
        <taxon>Gunneridae</taxon>
        <taxon>Pentapetalae</taxon>
        <taxon>rosids</taxon>
        <taxon>malvids</taxon>
        <taxon>Brassicales</taxon>
        <taxon>Brassicaceae</taxon>
        <taxon>Camelineae</taxon>
        <taxon>Arabidopsis</taxon>
    </lineage>
</organism>
<name>NHX5_ARATH</name>
<keyword id="KW-0050">Antiport</keyword>
<keyword id="KW-0967">Endosome</keyword>
<keyword id="KW-0325">Glycoprotein</keyword>
<keyword id="KW-0333">Golgi apparatus</keyword>
<keyword id="KW-0406">Ion transport</keyword>
<keyword id="KW-0472">Membrane</keyword>
<keyword id="KW-0630">Potassium</keyword>
<keyword id="KW-0633">Potassium transport</keyword>
<keyword id="KW-1185">Reference proteome</keyword>
<keyword id="KW-0915">Sodium</keyword>
<keyword id="KW-0739">Sodium transport</keyword>
<keyword id="KW-0812">Transmembrane</keyword>
<keyword id="KW-1133">Transmembrane helix</keyword>
<keyword id="KW-0813">Transport</keyword>
<proteinExistence type="evidence at transcript level"/>
<accession>Q8S396</accession>
<accession>Q0WWC0</accession>
<accession>Q9SLJ7</accession>